<protein>
    <recommendedName>
        <fullName evidence="1">ATP synthase epsilon chain</fullName>
    </recommendedName>
    <alternativeName>
        <fullName evidence="1">ATP synthase F1 sector epsilon subunit</fullName>
    </alternativeName>
    <alternativeName>
        <fullName evidence="1">F-ATPase epsilon subunit</fullName>
    </alternativeName>
</protein>
<name>ATPE_STAAW</name>
<gene>
    <name evidence="1" type="primary">atpC</name>
    <name type="ordered locus">MW2026</name>
</gene>
<dbReference type="EMBL" id="BA000033">
    <property type="protein sequence ID" value="BAB95891.1"/>
    <property type="molecule type" value="Genomic_DNA"/>
</dbReference>
<dbReference type="RefSeq" id="WP_001094394.1">
    <property type="nucleotide sequence ID" value="NC_003923.1"/>
</dbReference>
<dbReference type="SMR" id="P63666"/>
<dbReference type="KEGG" id="sam:MW2026"/>
<dbReference type="HOGENOM" id="CLU_084338_1_3_9"/>
<dbReference type="GO" id="GO:0005886">
    <property type="term" value="C:plasma membrane"/>
    <property type="evidence" value="ECO:0007669"/>
    <property type="project" value="UniProtKB-SubCell"/>
</dbReference>
<dbReference type="GO" id="GO:0045259">
    <property type="term" value="C:proton-transporting ATP synthase complex"/>
    <property type="evidence" value="ECO:0007669"/>
    <property type="project" value="UniProtKB-KW"/>
</dbReference>
<dbReference type="GO" id="GO:0005524">
    <property type="term" value="F:ATP binding"/>
    <property type="evidence" value="ECO:0007669"/>
    <property type="project" value="UniProtKB-UniRule"/>
</dbReference>
<dbReference type="GO" id="GO:0046933">
    <property type="term" value="F:proton-transporting ATP synthase activity, rotational mechanism"/>
    <property type="evidence" value="ECO:0007669"/>
    <property type="project" value="UniProtKB-UniRule"/>
</dbReference>
<dbReference type="CDD" id="cd12152">
    <property type="entry name" value="F1-ATPase_delta"/>
    <property type="match status" value="1"/>
</dbReference>
<dbReference type="FunFam" id="1.20.5.440:FF:000001">
    <property type="entry name" value="ATP synthase epsilon chain"/>
    <property type="match status" value="1"/>
</dbReference>
<dbReference type="FunFam" id="2.60.15.10:FF:000001">
    <property type="entry name" value="ATP synthase epsilon chain"/>
    <property type="match status" value="1"/>
</dbReference>
<dbReference type="Gene3D" id="1.20.5.440">
    <property type="entry name" value="ATP synthase delta/epsilon subunit, C-terminal domain"/>
    <property type="match status" value="1"/>
</dbReference>
<dbReference type="Gene3D" id="2.60.15.10">
    <property type="entry name" value="F0F1 ATP synthase delta/epsilon subunit, N-terminal"/>
    <property type="match status" value="1"/>
</dbReference>
<dbReference type="HAMAP" id="MF_00530">
    <property type="entry name" value="ATP_synth_epsil_bac"/>
    <property type="match status" value="1"/>
</dbReference>
<dbReference type="InterPro" id="IPR036794">
    <property type="entry name" value="ATP_F1_dsu/esu_C_sf"/>
</dbReference>
<dbReference type="InterPro" id="IPR001469">
    <property type="entry name" value="ATP_synth_F1_dsu/esu"/>
</dbReference>
<dbReference type="InterPro" id="IPR020546">
    <property type="entry name" value="ATP_synth_F1_dsu/esu_N"/>
</dbReference>
<dbReference type="InterPro" id="IPR020547">
    <property type="entry name" value="ATP_synth_F1_esu_C"/>
</dbReference>
<dbReference type="InterPro" id="IPR036771">
    <property type="entry name" value="ATPsynth_dsu/esu_N"/>
</dbReference>
<dbReference type="NCBIfam" id="TIGR01216">
    <property type="entry name" value="ATP_synt_epsi"/>
    <property type="match status" value="1"/>
</dbReference>
<dbReference type="NCBIfam" id="NF001846">
    <property type="entry name" value="PRK00571.1-3"/>
    <property type="match status" value="1"/>
</dbReference>
<dbReference type="NCBIfam" id="NF009980">
    <property type="entry name" value="PRK13446.1"/>
    <property type="match status" value="1"/>
</dbReference>
<dbReference type="PANTHER" id="PTHR13822">
    <property type="entry name" value="ATP SYNTHASE DELTA/EPSILON CHAIN"/>
    <property type="match status" value="1"/>
</dbReference>
<dbReference type="PANTHER" id="PTHR13822:SF10">
    <property type="entry name" value="ATP SYNTHASE EPSILON CHAIN, CHLOROPLASTIC"/>
    <property type="match status" value="1"/>
</dbReference>
<dbReference type="Pfam" id="PF00401">
    <property type="entry name" value="ATP-synt_DE"/>
    <property type="match status" value="1"/>
</dbReference>
<dbReference type="Pfam" id="PF02823">
    <property type="entry name" value="ATP-synt_DE_N"/>
    <property type="match status" value="1"/>
</dbReference>
<dbReference type="SUPFAM" id="SSF46604">
    <property type="entry name" value="Epsilon subunit of F1F0-ATP synthase C-terminal domain"/>
    <property type="match status" value="1"/>
</dbReference>
<dbReference type="SUPFAM" id="SSF51344">
    <property type="entry name" value="Epsilon subunit of F1F0-ATP synthase N-terminal domain"/>
    <property type="match status" value="1"/>
</dbReference>
<proteinExistence type="inferred from homology"/>
<sequence length="134" mass="14844">MNTLNLDIVTPNGSVYNRDNVELVVMQTTAGEIGVMSGHIPTVAALKTGFVKVKFHDGTEYIAVSDGFVEVRKDKVSIIVQTAETAREIDVERAKLAKARAESHLENDDDNTDIHRAERALERANNRLRVAELK</sequence>
<feature type="chain" id="PRO_0000188205" description="ATP synthase epsilon chain">
    <location>
        <begin position="1"/>
        <end position="134"/>
    </location>
</feature>
<comment type="function">
    <text evidence="1">Produces ATP from ADP in the presence of a proton gradient across the membrane.</text>
</comment>
<comment type="subunit">
    <text>F-type ATPases have 2 components, CF(1) - the catalytic core - and CF(0) - the membrane proton channel. CF(1) has five subunits: alpha(3), beta(3), gamma(1), delta(1), epsilon(1). CF(0) has three main subunits: a, b and c.</text>
</comment>
<comment type="subcellular location">
    <subcellularLocation>
        <location evidence="1">Cell membrane</location>
        <topology evidence="1">Peripheral membrane protein</topology>
    </subcellularLocation>
</comment>
<comment type="similarity">
    <text evidence="1">Belongs to the ATPase epsilon chain family.</text>
</comment>
<reference key="1">
    <citation type="journal article" date="2002" name="Lancet">
        <title>Genome and virulence determinants of high virulence community-acquired MRSA.</title>
        <authorList>
            <person name="Baba T."/>
            <person name="Takeuchi F."/>
            <person name="Kuroda M."/>
            <person name="Yuzawa H."/>
            <person name="Aoki K."/>
            <person name="Oguchi A."/>
            <person name="Nagai Y."/>
            <person name="Iwama N."/>
            <person name="Asano K."/>
            <person name="Naimi T."/>
            <person name="Kuroda H."/>
            <person name="Cui L."/>
            <person name="Yamamoto K."/>
            <person name="Hiramatsu K."/>
        </authorList>
    </citation>
    <scope>NUCLEOTIDE SEQUENCE [LARGE SCALE GENOMIC DNA]</scope>
    <source>
        <strain>MW2</strain>
    </source>
</reference>
<keyword id="KW-0066">ATP synthesis</keyword>
<keyword id="KW-1003">Cell membrane</keyword>
<keyword id="KW-0139">CF(1)</keyword>
<keyword id="KW-0375">Hydrogen ion transport</keyword>
<keyword id="KW-0406">Ion transport</keyword>
<keyword id="KW-0472">Membrane</keyword>
<keyword id="KW-0813">Transport</keyword>
<accession>P63666</accession>
<accession>Q99SF6</accession>
<evidence type="ECO:0000255" key="1">
    <source>
        <dbReference type="HAMAP-Rule" id="MF_00530"/>
    </source>
</evidence>
<organism>
    <name type="scientific">Staphylococcus aureus (strain MW2)</name>
    <dbReference type="NCBI Taxonomy" id="196620"/>
    <lineage>
        <taxon>Bacteria</taxon>
        <taxon>Bacillati</taxon>
        <taxon>Bacillota</taxon>
        <taxon>Bacilli</taxon>
        <taxon>Bacillales</taxon>
        <taxon>Staphylococcaceae</taxon>
        <taxon>Staphylococcus</taxon>
    </lineage>
</organism>